<reference key="1">
    <citation type="journal article" date="1991" name="Gene">
        <title>Sequence of fimbrial subunit-encoding genes from virulent and benign isolates of Dichelobacter (Bacteroides) nodosus.</title>
        <authorList>
            <person name="Billington S.J."/>
            <person name="Rood J.I."/>
        </authorList>
    </citation>
    <scope>NUCLEOTIDE SEQUENCE [GENOMIC DNA]</scope>
    <source>
        <strain>Serogroup B1 isolate AC6</strain>
    </source>
</reference>
<feature type="propeptide" id="PRO_0000024119" description="Leader sequence" evidence="2">
    <location>
        <begin position="1"/>
        <end position="7"/>
    </location>
</feature>
<feature type="chain" id="PRO_0000024120" description="Fimbrial protein">
    <location>
        <begin position="8"/>
        <end position="160"/>
    </location>
</feature>
<feature type="transmembrane region" description="Helical" evidence="1">
    <location>
        <begin position="8"/>
        <end position="28"/>
    </location>
</feature>
<feature type="modified residue" description="N-methylphenylalanine" evidence="2">
    <location>
        <position position="8"/>
    </location>
</feature>
<keyword id="KW-0281">Fimbrium</keyword>
<keyword id="KW-0472">Membrane</keyword>
<keyword id="KW-0488">Methylation</keyword>
<keyword id="KW-0812">Transmembrane</keyword>
<keyword id="KW-1133">Transmembrane helix</keyword>
<dbReference type="EMBL" id="M37471">
    <property type="protein sequence ID" value="AAA23337.1"/>
    <property type="molecule type" value="Genomic_DNA"/>
</dbReference>
<dbReference type="PIR" id="PS0418">
    <property type="entry name" value="PS0418"/>
</dbReference>
<dbReference type="SMR" id="P27690"/>
<dbReference type="GO" id="GO:0016020">
    <property type="term" value="C:membrane"/>
    <property type="evidence" value="ECO:0007669"/>
    <property type="project" value="UniProtKB-SubCell"/>
</dbReference>
<dbReference type="GO" id="GO:0009289">
    <property type="term" value="C:pilus"/>
    <property type="evidence" value="ECO:0007669"/>
    <property type="project" value="UniProtKB-SubCell"/>
</dbReference>
<dbReference type="GO" id="GO:0007155">
    <property type="term" value="P:cell adhesion"/>
    <property type="evidence" value="ECO:0007669"/>
    <property type="project" value="InterPro"/>
</dbReference>
<dbReference type="Gene3D" id="3.30.700.10">
    <property type="entry name" value="Glycoprotein, Type 4 Pilin"/>
    <property type="match status" value="1"/>
</dbReference>
<dbReference type="InterPro" id="IPR012902">
    <property type="entry name" value="N_methyl_site"/>
</dbReference>
<dbReference type="InterPro" id="IPR001082">
    <property type="entry name" value="Pilin"/>
</dbReference>
<dbReference type="InterPro" id="IPR045584">
    <property type="entry name" value="Pilin-like"/>
</dbReference>
<dbReference type="InterPro" id="IPR050470">
    <property type="entry name" value="T4P/T2SS_Core"/>
</dbReference>
<dbReference type="NCBIfam" id="TIGR02532">
    <property type="entry name" value="IV_pilin_GFxxxE"/>
    <property type="match status" value="1"/>
</dbReference>
<dbReference type="PANTHER" id="PTHR30093">
    <property type="entry name" value="GENERAL SECRETION PATHWAY PROTEIN G"/>
    <property type="match status" value="1"/>
</dbReference>
<dbReference type="PANTHER" id="PTHR30093:SF34">
    <property type="entry name" value="PREPILIN PEPTIDASE-DEPENDENT PROTEIN D"/>
    <property type="match status" value="1"/>
</dbReference>
<dbReference type="Pfam" id="PF07963">
    <property type="entry name" value="N_methyl"/>
    <property type="match status" value="1"/>
</dbReference>
<dbReference type="Pfam" id="PF00114">
    <property type="entry name" value="Pilin"/>
    <property type="match status" value="1"/>
</dbReference>
<dbReference type="SUPFAM" id="SSF54523">
    <property type="entry name" value="Pili subunits"/>
    <property type="match status" value="1"/>
</dbReference>
<dbReference type="PROSITE" id="PS00409">
    <property type="entry name" value="PROKAR_NTER_METHYL"/>
    <property type="match status" value="1"/>
</dbReference>
<protein>
    <recommendedName>
        <fullName>Fimbrial protein</fullName>
    </recommendedName>
    <alternativeName>
        <fullName>Pilin</fullName>
    </alternativeName>
    <alternativeName>
        <fullName>Serogroup B1/AC6</fullName>
    </alternativeName>
</protein>
<proteinExistence type="inferred from homology"/>
<gene>
    <name type="primary">fimA</name>
</gene>
<accession>P27690</accession>
<comment type="subunit">
    <text>The pili are polar flexible filaments of about 5.4 nanometers diameter and 2.5 micrometers average length; they consist of only a single polypeptide chain arranged in a helical configuration of five subunits per turn in the assembled pilus.</text>
</comment>
<comment type="subcellular location">
    <subcellularLocation>
        <location>Fimbrium</location>
    </subcellularLocation>
    <subcellularLocation>
        <location evidence="1">Membrane</location>
        <topology evidence="1">Single-pass membrane protein</topology>
    </subcellularLocation>
</comment>
<comment type="similarity">
    <text evidence="3">Belongs to the N-Me-Phe pilin family.</text>
</comment>
<organism>
    <name type="scientific">Dichelobacter nodosus</name>
    <name type="common">Bacteroides nodosus</name>
    <dbReference type="NCBI Taxonomy" id="870"/>
    <lineage>
        <taxon>Bacteria</taxon>
        <taxon>Pseudomonadati</taxon>
        <taxon>Pseudomonadota</taxon>
        <taxon>Gammaproteobacteria</taxon>
        <taxon>Cardiobacteriales</taxon>
        <taxon>Cardiobacteriaceae</taxon>
        <taxon>Dichelobacter</taxon>
    </lineage>
</organism>
<name>FMA6_DICNO</name>
<sequence length="160" mass="16620">MKSLQKGFTLIELMIVVAIIGILAAFAIPAYNDYIARSQAAEGVSLADGLKVRIAENLQDGECKGPDADPASGVVGNKDTGKYALAEIDGTYDASKTAAGDPNGCKVNITYGQGTAADKISKLITGKKLVLDQLVNGSFIQGDGTDLADKFIPNAVKAKK</sequence>
<evidence type="ECO:0000255" key="1"/>
<evidence type="ECO:0000255" key="2">
    <source>
        <dbReference type="PROSITE-ProRule" id="PRU01070"/>
    </source>
</evidence>
<evidence type="ECO:0000305" key="3"/>